<evidence type="ECO:0000250" key="1"/>
<evidence type="ECO:0000255" key="2"/>
<evidence type="ECO:0000256" key="3">
    <source>
        <dbReference type="SAM" id="MobiDB-lite"/>
    </source>
</evidence>
<evidence type="ECO:0000305" key="4"/>
<keyword id="KW-0496">Mitochondrion</keyword>
<keyword id="KW-1185">Reference proteome</keyword>
<keyword id="KW-0677">Repeat</keyword>
<keyword id="KW-0687">Ribonucleoprotein</keyword>
<keyword id="KW-0689">Ribosomal protein</keyword>
<keyword id="KW-0694">RNA-binding</keyword>
<keyword id="KW-0699">rRNA-binding</keyword>
<keyword id="KW-0809">Transit peptide</keyword>
<keyword id="KW-0810">Translation regulation</keyword>
<gene>
    <name type="primary">ptcd3</name>
</gene>
<proteinExistence type="evidence at transcript level"/>
<sequence>MAAPCVRLGSVRCTGTLLRYFCGSARHQAAAASHEEIDIPRRKSWDKTAVLQALAYTVSHDPTAAHYMFQDDPFLVPKTSSEFRLYSLSKESGRNAAKYIIGTHPKLFQNDIAEPHIPCLMPENFQPQIEGVSEEALKERIQLRRIKESIDLFDQLLQGGTAPSLETTNRLLDLICFYGDREPTRDIQTSEQNQQDDQDQQETEDSKKRPGQYRKASEILGSWRENNNAERIFNLMPERNAHSFCTLIQGMVKYGSSNKAFNTYTDLMNNRLTADVQTFNALILAAPDMKEKYNEKWDLIVELLKHMVQQNVRPNLLTFNSVLKSLRKCGTMARGLALQTINEMKALNIEPSLGTYNHLLGVFYKGALSPRGQTEILSEVLDEIEGRSFTLRDPDDVYFFTNAMRVCLDLKDIELAYRLHALQQTADNRGLMGDFYLQSTYYGRFFNLLCMMENIDVILKWYRELIPSLYYPNSRGMLDLLQALDMDNCLDLIPQIWKDIKQIGHSNKVELVEEVLKLMARDVQPAELQAAFADTALDIKSLYEVRDRVRIVLEWSSASLGNISVLLARAGRTEEAWKMLQRFKTNHRVPSTEVVDEFLSRAKMDANTNLAISLVQLAVGFSLPNTGKLAERVMEEFNVSEEQRLTLEDLQKSHSSSSSSSESSDSDRE</sequence>
<organism>
    <name type="scientific">Xenopus laevis</name>
    <name type="common">African clawed frog</name>
    <dbReference type="NCBI Taxonomy" id="8355"/>
    <lineage>
        <taxon>Eukaryota</taxon>
        <taxon>Metazoa</taxon>
        <taxon>Chordata</taxon>
        <taxon>Craniata</taxon>
        <taxon>Vertebrata</taxon>
        <taxon>Euteleostomi</taxon>
        <taxon>Amphibia</taxon>
        <taxon>Batrachia</taxon>
        <taxon>Anura</taxon>
        <taxon>Pipoidea</taxon>
        <taxon>Pipidae</taxon>
        <taxon>Xenopodinae</taxon>
        <taxon>Xenopus</taxon>
        <taxon>Xenopus</taxon>
    </lineage>
</organism>
<accession>Q32N55</accession>
<accession>Q52KZ1</accession>
<comment type="function">
    <text evidence="1">Mitochondrial protein that may have a role in mitochondrial translation.</text>
</comment>
<comment type="subcellular location">
    <subcellularLocation>
        <location evidence="1">Mitochondrion</location>
    </subcellularLocation>
</comment>
<comment type="similarity">
    <text evidence="4">Belongs to the mitochondrion-specific ribosomal protein mS39 family.</text>
</comment>
<dbReference type="EMBL" id="BC094135">
    <property type="protein sequence ID" value="AAH94135.1"/>
    <property type="molecule type" value="mRNA"/>
</dbReference>
<dbReference type="EMBL" id="BC108830">
    <property type="protein sequence ID" value="AAI08831.1"/>
    <property type="molecule type" value="mRNA"/>
</dbReference>
<dbReference type="RefSeq" id="NP_001089914.1">
    <property type="nucleotide sequence ID" value="NM_001096445.1"/>
</dbReference>
<dbReference type="SMR" id="Q32N55"/>
<dbReference type="DNASU" id="734981"/>
<dbReference type="GeneID" id="734981"/>
<dbReference type="KEGG" id="xla:734981"/>
<dbReference type="AGR" id="Xenbase:XB-GENE-961486"/>
<dbReference type="CTD" id="734981"/>
<dbReference type="Xenbase" id="XB-GENE-961486">
    <property type="gene designation" value="ptcd3.L"/>
</dbReference>
<dbReference type="OrthoDB" id="185373at2759"/>
<dbReference type="Proteomes" id="UP000186698">
    <property type="component" value="Chromosome 1L"/>
</dbReference>
<dbReference type="Bgee" id="734981">
    <property type="expression patterns" value="Expressed in heart and 19 other cell types or tissues"/>
</dbReference>
<dbReference type="GO" id="GO:0005739">
    <property type="term" value="C:mitochondrion"/>
    <property type="evidence" value="ECO:0000250"/>
    <property type="project" value="UniProtKB"/>
</dbReference>
<dbReference type="GO" id="GO:1990904">
    <property type="term" value="C:ribonucleoprotein complex"/>
    <property type="evidence" value="ECO:0007669"/>
    <property type="project" value="UniProtKB-KW"/>
</dbReference>
<dbReference type="GO" id="GO:0005840">
    <property type="term" value="C:ribosome"/>
    <property type="evidence" value="ECO:0007669"/>
    <property type="project" value="UniProtKB-KW"/>
</dbReference>
<dbReference type="GO" id="GO:0043024">
    <property type="term" value="F:ribosomal small subunit binding"/>
    <property type="evidence" value="ECO:0000250"/>
    <property type="project" value="UniProtKB"/>
</dbReference>
<dbReference type="GO" id="GO:0019843">
    <property type="term" value="F:rRNA binding"/>
    <property type="evidence" value="ECO:0000250"/>
    <property type="project" value="UniProtKB"/>
</dbReference>
<dbReference type="GO" id="GO:0032543">
    <property type="term" value="P:mitochondrial translation"/>
    <property type="evidence" value="ECO:0000250"/>
    <property type="project" value="UniProtKB"/>
</dbReference>
<dbReference type="GO" id="GO:0006417">
    <property type="term" value="P:regulation of translation"/>
    <property type="evidence" value="ECO:0007669"/>
    <property type="project" value="UniProtKB-KW"/>
</dbReference>
<dbReference type="FunFam" id="1.25.40.10:FF:002139">
    <property type="entry name" value="Pentatricopeptide repeat domain 3"/>
    <property type="match status" value="1"/>
</dbReference>
<dbReference type="Gene3D" id="1.25.40.10">
    <property type="entry name" value="Tetratricopeptide repeat domain"/>
    <property type="match status" value="2"/>
</dbReference>
<dbReference type="InterPro" id="IPR002885">
    <property type="entry name" value="Pentatricopeptide_rpt"/>
</dbReference>
<dbReference type="InterPro" id="IPR037387">
    <property type="entry name" value="PTCD3"/>
</dbReference>
<dbReference type="InterPro" id="IPR055063">
    <property type="entry name" value="Rib_mS39_PPR"/>
</dbReference>
<dbReference type="InterPro" id="IPR011990">
    <property type="entry name" value="TPR-like_helical_dom_sf"/>
</dbReference>
<dbReference type="PANTHER" id="PTHR16276">
    <property type="entry name" value="PENTATRICOPEPTIDE REPEAT DOMAIN-CONTAINING PROTEIN 3"/>
    <property type="match status" value="1"/>
</dbReference>
<dbReference type="PANTHER" id="PTHR16276:SF1">
    <property type="entry name" value="SMALL RIBOSOMAL SUBUNIT PROTEIN MS39"/>
    <property type="match status" value="1"/>
</dbReference>
<dbReference type="Pfam" id="PF13812">
    <property type="entry name" value="PPR_3"/>
    <property type="match status" value="1"/>
</dbReference>
<dbReference type="Pfam" id="PF22330">
    <property type="entry name" value="Rib_mS39_PPR"/>
    <property type="match status" value="1"/>
</dbReference>
<dbReference type="PROSITE" id="PS51375">
    <property type="entry name" value="PPR"/>
    <property type="match status" value="4"/>
</dbReference>
<reference key="1">
    <citation type="submission" date="2005-11" db="EMBL/GenBank/DDBJ databases">
        <authorList>
            <consortium name="NIH - Xenopus Gene Collection (XGC) project"/>
        </authorList>
    </citation>
    <scope>NUCLEOTIDE SEQUENCE [LARGE SCALE MRNA]</scope>
    <source>
        <tissue>Embryo</tissue>
        <tissue>Eye</tissue>
    </source>
</reference>
<protein>
    <recommendedName>
        <fullName evidence="4">Small ribosomal subunit protein mS39</fullName>
    </recommendedName>
    <alternativeName>
        <fullName>Pentatricopeptide repeat domain-containing protein 3, mitochondrial</fullName>
    </alternativeName>
</protein>
<name>PTCD3_XENLA</name>
<feature type="transit peptide" description="Mitochondrion" evidence="2">
    <location>
        <begin position="1"/>
        <end position="13"/>
    </location>
</feature>
<feature type="chain" id="PRO_0000305032" description="Small ribosomal subunit protein mS39">
    <location>
        <begin position="14"/>
        <end position="669"/>
    </location>
</feature>
<feature type="repeat" description="PPR 1">
    <location>
        <begin position="129"/>
        <end position="163"/>
    </location>
</feature>
<feature type="repeat" description="PPR 2">
    <location>
        <begin position="164"/>
        <end position="199"/>
    </location>
</feature>
<feature type="repeat" description="PPR 3">
    <location>
        <begin position="209"/>
        <end position="239"/>
    </location>
</feature>
<feature type="repeat" description="PPR 4">
    <location>
        <begin position="240"/>
        <end position="274"/>
    </location>
</feature>
<feature type="repeat" description="PPR 5">
    <location>
        <begin position="275"/>
        <end position="314"/>
    </location>
</feature>
<feature type="repeat" description="PPR 6">
    <location>
        <begin position="315"/>
        <end position="351"/>
    </location>
</feature>
<feature type="repeat" description="PPR 7">
    <location>
        <begin position="352"/>
        <end position="392"/>
    </location>
</feature>
<feature type="repeat" description="PPR 8">
    <location>
        <begin position="396"/>
        <end position="430"/>
    </location>
</feature>
<feature type="repeat" description="PPR 9">
    <location>
        <begin position="438"/>
        <end position="472"/>
    </location>
</feature>
<feature type="repeat" description="PPR 10">
    <location>
        <begin position="473"/>
        <end position="507"/>
    </location>
</feature>
<feature type="repeat" description="PPR 11">
    <location>
        <begin position="556"/>
        <end position="590"/>
    </location>
</feature>
<feature type="region of interest" description="Disordered" evidence="3">
    <location>
        <begin position="186"/>
        <end position="218"/>
    </location>
</feature>
<feature type="region of interest" description="Disordered" evidence="3">
    <location>
        <begin position="648"/>
        <end position="669"/>
    </location>
</feature>
<feature type="compositionally biased region" description="Acidic residues" evidence="3">
    <location>
        <begin position="194"/>
        <end position="203"/>
    </location>
</feature>
<feature type="compositionally biased region" description="Low complexity" evidence="3">
    <location>
        <begin position="653"/>
        <end position="663"/>
    </location>
</feature>
<feature type="sequence conflict" description="In Ref. 1; AAH94135." evidence="4" ref="1">
    <original>C</original>
    <variation>R</variation>
    <location>
        <position position="489"/>
    </location>
</feature>
<feature type="sequence conflict" description="In Ref. 1; AAH94135." evidence="4" ref="1">
    <original>N</original>
    <variation>S</variation>
    <location>
        <position position="638"/>
    </location>
</feature>